<proteinExistence type="evidence at protein level"/>
<comment type="interaction">
    <interactant intactId="EBI-3957665">
        <id>Q96LI6</id>
    </interactant>
    <interactant intactId="EBI-930964">
        <id>P54253</id>
        <label>ATXN1</label>
    </interactant>
    <organismsDiffer>false</organismsDiffer>
    <experiments>3</experiments>
</comment>
<comment type="interaction">
    <interactant intactId="EBI-3957665">
        <id>Q96LI6</id>
    </interactant>
    <interactant intactId="EBI-16429313">
        <id>B4DE54</id>
        <label>BANP</label>
    </interactant>
    <organismsDiffer>false</organismsDiffer>
    <experiments>3</experiments>
</comment>
<comment type="interaction">
    <interactant intactId="EBI-3957665">
        <id>Q96LI6</id>
    </interactant>
    <interactant intactId="EBI-16429296">
        <id>Q8N9N5-7</id>
        <label>BANP</label>
    </interactant>
    <organismsDiffer>false</organismsDiffer>
    <experiments>3</experiments>
</comment>
<comment type="interaction">
    <interactant intactId="EBI-3957665">
        <id>Q96LI6</id>
    </interactant>
    <interactant intactId="EBI-953896">
        <id>Q9NP55</id>
        <label>BPIFA1</label>
    </interactant>
    <organismsDiffer>false</organismsDiffer>
    <experiments>3</experiments>
</comment>
<comment type="interaction">
    <interactant intactId="EBI-3957665">
        <id>Q96LI6</id>
    </interactant>
    <interactant intactId="EBI-12010594">
        <id>O75909-2</id>
        <label>CCNK</label>
    </interactant>
    <organismsDiffer>false</organismsDiffer>
    <experiments>3</experiments>
</comment>
<comment type="interaction">
    <interactant intactId="EBI-3957665">
        <id>Q96LI6</id>
    </interactant>
    <interactant intactId="EBI-724310">
        <id>Q15038</id>
        <label>DAZAP2</label>
    </interactant>
    <organismsDiffer>false</organismsDiffer>
    <experiments>3</experiments>
</comment>
<comment type="interaction">
    <interactant intactId="EBI-3957665">
        <id>Q96LI6</id>
    </interactant>
    <interactant intactId="EBI-740376">
        <id>Q86UW9</id>
        <label>DTX2</label>
    </interactant>
    <organismsDiffer>false</organismsDiffer>
    <experiments>3</experiments>
</comment>
<comment type="interaction">
    <interactant intactId="EBI-3957665">
        <id>Q96LI6</id>
    </interactant>
    <interactant intactId="EBI-10188645">
        <id>O75603</id>
        <label>GCM2</label>
    </interactant>
    <organismsDiffer>false</organismsDiffer>
    <experiments>12</experiments>
</comment>
<comment type="interaction">
    <interactant intactId="EBI-3957665">
        <id>Q96LI6</id>
    </interactant>
    <interactant intactId="EBI-740220">
        <id>O14964</id>
        <label>HGS</label>
    </interactant>
    <organismsDiffer>false</organismsDiffer>
    <experiments>3</experiments>
</comment>
<comment type="interaction">
    <interactant intactId="EBI-3957665">
        <id>Q96LI6</id>
    </interactant>
    <interactant intactId="EBI-352986">
        <id>P52597</id>
        <label>HNRNPF</label>
    </interactant>
    <organismsDiffer>false</organismsDiffer>
    <experiments>3</experiments>
</comment>
<comment type="interaction">
    <interactant intactId="EBI-3957665">
        <id>Q96LI6</id>
    </interactant>
    <interactant intactId="EBI-1055254">
        <id>Q8WXH2</id>
        <label>JPH3</label>
    </interactant>
    <organismsDiffer>false</organismsDiffer>
    <experiments>3</experiments>
</comment>
<comment type="interaction">
    <interactant intactId="EBI-3957665">
        <id>Q96LI6</id>
    </interactant>
    <interactant intactId="EBI-11956831">
        <id>Q13952-2</id>
        <label>NFYC</label>
    </interactant>
    <organismsDiffer>false</organismsDiffer>
    <experiments>3</experiments>
</comment>
<comment type="interaction">
    <interactant intactId="EBI-3957665">
        <id>Q96LI6</id>
    </interactant>
    <interactant intactId="EBI-527784">
        <id>Q6GQQ9</id>
        <label>OTUD7B</label>
    </interactant>
    <organismsDiffer>false</organismsDiffer>
    <experiments>3</experiments>
</comment>
<comment type="interaction">
    <interactant intactId="EBI-3957665">
        <id>Q96LI6</id>
    </interactant>
    <interactant intactId="EBI-716404">
        <id>P16284</id>
        <label>PECAM1</label>
    </interactant>
    <organismsDiffer>false</organismsDiffer>
    <experiments>3</experiments>
</comment>
<comment type="interaction">
    <interactant intactId="EBI-3957665">
        <id>Q96LI6</id>
    </interactant>
    <interactant intactId="EBI-2798044">
        <id>Q2TAL8</id>
        <label>QRICH1</label>
    </interactant>
    <organismsDiffer>false</organismsDiffer>
    <experiments>3</experiments>
</comment>
<comment type="interaction">
    <interactant intactId="EBI-3957665">
        <id>Q96LI6</id>
    </interactant>
    <interactant intactId="EBI-10176148">
        <id>B7ZLP7</id>
        <label>RBM47</label>
    </interactant>
    <organismsDiffer>false</organismsDiffer>
    <experiments>3</experiments>
</comment>
<comment type="interaction">
    <interactant intactId="EBI-3957665">
        <id>Q96LI6</id>
    </interactant>
    <interactant intactId="EBI-5452954">
        <id>O60248</id>
        <label>SOX15</label>
    </interactant>
    <organismsDiffer>false</organismsDiffer>
    <experiments>3</experiments>
</comment>
<comment type="interaction">
    <interactant intactId="EBI-3957665">
        <id>Q96LI6</id>
    </interactant>
    <interactant intactId="EBI-10290607">
        <id>Q7L1I2</id>
        <label>SV2B</label>
    </interactant>
    <organismsDiffer>false</organismsDiffer>
    <experiments>3</experiments>
</comment>
<comment type="interaction">
    <interactant intactId="EBI-3957665">
        <id>Q96LI6</id>
    </interactant>
    <interactant intactId="EBI-2824328">
        <id>O95947</id>
        <label>TBX6</label>
    </interactant>
    <organismsDiffer>false</organismsDiffer>
    <experiments>7</experiments>
</comment>
<comment type="interaction">
    <interactant intactId="EBI-3957665">
        <id>Q96LI6</id>
    </interactant>
    <interactant intactId="EBI-12815137">
        <id>Q96NM4-3</id>
        <label>TOX2</label>
    </interactant>
    <organismsDiffer>false</organismsDiffer>
    <experiments>3</experiments>
</comment>
<comment type="interaction">
    <interactant intactId="EBI-3957665">
        <id>Q96LI6</id>
    </interactant>
    <interactant intactId="EBI-473850">
        <id>P61086</id>
        <label>UBE2K</label>
    </interactant>
    <organismsDiffer>false</organismsDiffer>
    <experiments>3</experiments>
</comment>
<comment type="interaction">
    <interactant intactId="EBI-3957665">
        <id>Q96LI6</id>
    </interactant>
    <interactant intactId="EBI-353844">
        <id>P08670</id>
        <label>VIM</label>
    </interactant>
    <organismsDiffer>false</organismsDiffer>
    <experiments>3</experiments>
</comment>
<comment type="interaction">
    <interactant intactId="EBI-25830912">
        <id>Q96LI6-3</id>
    </interactant>
    <interactant intactId="EBI-296087">
        <id>P31749</id>
        <label>AKT1</label>
    </interactant>
    <organismsDiffer>false</organismsDiffer>
    <experiments>3</experiments>
</comment>
<comment type="interaction">
    <interactant intactId="EBI-25830912">
        <id>Q96LI6-3</id>
    </interactant>
    <interactant intactId="EBI-12275524">
        <id>P23560-2</id>
        <label>BDNF</label>
    </interactant>
    <organismsDiffer>false</organismsDiffer>
    <experiments>3</experiments>
</comment>
<comment type="interaction">
    <interactant intactId="EBI-25830912">
        <id>Q96LI6-3</id>
    </interactant>
    <interactant intactId="EBI-739060">
        <id>P02511</id>
        <label>CRYAB</label>
    </interactant>
    <organismsDiffer>false</organismsDiffer>
    <experiments>3</experiments>
</comment>
<comment type="interaction">
    <interactant intactId="EBI-25830912">
        <id>Q96LI6-3</id>
    </interactant>
    <interactant intactId="EBI-296047">
        <id>P07900</id>
        <label>HSP90AA1</label>
    </interactant>
    <organismsDiffer>false</organismsDiffer>
    <experiments>3</experiments>
</comment>
<comment type="subcellular location">
    <subcellularLocation>
        <location evidence="4">Nucleus</location>
    </subcellularLocation>
    <subcellularLocation>
        <location evidence="4">Cytoplasm</location>
    </subcellularLocation>
</comment>
<comment type="alternative products">
    <event type="alternative splicing"/>
    <isoform>
        <id>Q96LI6-1</id>
        <name>1</name>
        <sequence type="displayed"/>
    </isoform>
    <isoform>
        <id>Q96LI6-2</id>
        <name>2</name>
        <sequence type="described" ref="VSP_009179 VSP_009181"/>
    </isoform>
    <isoform>
        <id>Q96LI6-3</id>
        <name>3</name>
        <sequence type="described" ref="VSP_009180 VSP_009182"/>
    </isoform>
</comment>
<comment type="tissue specificity">
    <text evidence="3 4">Testis-specific. Present in Sertoli cells and spermatogenic cells (at protein level).</text>
</comment>
<comment type="similarity">
    <text evidence="8">Belongs to the HSF family.</text>
</comment>
<reference key="1">
    <citation type="submission" date="2003-06" db="EMBL/GenBank/DDBJ databases">
        <title>Characterization of HSFY, a novel AZFb gene on the Y chromosome with a possible role in human spermatogenesis.</title>
        <authorList>
            <person name="Salata E."/>
            <person name="Tessari A."/>
            <person name="Ferlin A."/>
            <person name="Bartoloni L."/>
            <person name="Slongo M."/>
            <person name="Foresta C."/>
        </authorList>
    </citation>
    <scope>NUCLEOTIDE SEQUENCE [MRNA] (ISOFORM 3)</scope>
    <source>
        <tissue>Testis</tissue>
    </source>
</reference>
<reference key="2">
    <citation type="journal article" date="2003" name="Nature">
        <title>The male-specific region of the human Y chromosome is a mosaic of discrete sequence classes.</title>
        <authorList>
            <person name="Skaletsky H."/>
            <person name="Kuroda-Kawaguchi T."/>
            <person name="Minx P.J."/>
            <person name="Cordum H.S."/>
            <person name="Hillier L.W."/>
            <person name="Brown L.G."/>
            <person name="Repping S."/>
            <person name="Pyntikova T."/>
            <person name="Ali J."/>
            <person name="Bieri T."/>
            <person name="Chinwalla A."/>
            <person name="Delehaunty A."/>
            <person name="Delehaunty K."/>
            <person name="Du H."/>
            <person name="Fewell G."/>
            <person name="Fulton L."/>
            <person name="Fulton R."/>
            <person name="Graves T.A."/>
            <person name="Hou S.-F."/>
            <person name="Latrielle P."/>
            <person name="Leonard S."/>
            <person name="Mardis E."/>
            <person name="Maupin R."/>
            <person name="McPherson J."/>
            <person name="Miner T."/>
            <person name="Nash W."/>
            <person name="Nguyen C."/>
            <person name="Ozersky P."/>
            <person name="Pepin K."/>
            <person name="Rock S."/>
            <person name="Rohlfing T."/>
            <person name="Scott K."/>
            <person name="Schultz B."/>
            <person name="Strong C."/>
            <person name="Tin-Wollam A."/>
            <person name="Yang S.-P."/>
            <person name="Waterston R.H."/>
            <person name="Wilson R.K."/>
            <person name="Rozen S."/>
            <person name="Page D.C."/>
        </authorList>
    </citation>
    <scope>NUCLEOTIDE SEQUENCE [MRNA] (ISOFORMS 1 AND 2)</scope>
    <scope>TISSUE SPECIFICITY</scope>
</reference>
<reference key="3">
    <citation type="journal article" date="2004" name="Nat. Genet.">
        <title>Complete sequencing and characterization of 21,243 full-length human cDNAs.</title>
        <authorList>
            <person name="Ota T."/>
            <person name="Suzuki Y."/>
            <person name="Nishikawa T."/>
            <person name="Otsuki T."/>
            <person name="Sugiyama T."/>
            <person name="Irie R."/>
            <person name="Wakamatsu A."/>
            <person name="Hayashi K."/>
            <person name="Sato H."/>
            <person name="Nagai K."/>
            <person name="Kimura K."/>
            <person name="Makita H."/>
            <person name="Sekine M."/>
            <person name="Obayashi M."/>
            <person name="Nishi T."/>
            <person name="Shibahara T."/>
            <person name="Tanaka T."/>
            <person name="Ishii S."/>
            <person name="Yamamoto J."/>
            <person name="Saito K."/>
            <person name="Kawai Y."/>
            <person name="Isono Y."/>
            <person name="Nakamura Y."/>
            <person name="Nagahari K."/>
            <person name="Murakami K."/>
            <person name="Yasuda T."/>
            <person name="Iwayanagi T."/>
            <person name="Wagatsuma M."/>
            <person name="Shiratori A."/>
            <person name="Sudo H."/>
            <person name="Hosoiri T."/>
            <person name="Kaku Y."/>
            <person name="Kodaira H."/>
            <person name="Kondo H."/>
            <person name="Sugawara M."/>
            <person name="Takahashi M."/>
            <person name="Kanda K."/>
            <person name="Yokoi T."/>
            <person name="Furuya T."/>
            <person name="Kikkawa E."/>
            <person name="Omura Y."/>
            <person name="Abe K."/>
            <person name="Kamihara K."/>
            <person name="Katsuta N."/>
            <person name="Sato K."/>
            <person name="Tanikawa M."/>
            <person name="Yamazaki M."/>
            <person name="Ninomiya K."/>
            <person name="Ishibashi T."/>
            <person name="Yamashita H."/>
            <person name="Murakawa K."/>
            <person name="Fujimori K."/>
            <person name="Tanai H."/>
            <person name="Kimata M."/>
            <person name="Watanabe M."/>
            <person name="Hiraoka S."/>
            <person name="Chiba Y."/>
            <person name="Ishida S."/>
            <person name="Ono Y."/>
            <person name="Takiguchi S."/>
            <person name="Watanabe S."/>
            <person name="Yosida M."/>
            <person name="Hotuta T."/>
            <person name="Kusano J."/>
            <person name="Kanehori K."/>
            <person name="Takahashi-Fujii A."/>
            <person name="Hara H."/>
            <person name="Tanase T.-O."/>
            <person name="Nomura Y."/>
            <person name="Togiya S."/>
            <person name="Komai F."/>
            <person name="Hara R."/>
            <person name="Takeuchi K."/>
            <person name="Arita M."/>
            <person name="Imose N."/>
            <person name="Musashino K."/>
            <person name="Yuuki H."/>
            <person name="Oshima A."/>
            <person name="Sasaki N."/>
            <person name="Aotsuka S."/>
            <person name="Yoshikawa Y."/>
            <person name="Matsunawa H."/>
            <person name="Ichihara T."/>
            <person name="Shiohata N."/>
            <person name="Sano S."/>
            <person name="Moriya S."/>
            <person name="Momiyama H."/>
            <person name="Satoh N."/>
            <person name="Takami S."/>
            <person name="Terashima Y."/>
            <person name="Suzuki O."/>
            <person name="Nakagawa S."/>
            <person name="Senoh A."/>
            <person name="Mizoguchi H."/>
            <person name="Goto Y."/>
            <person name="Shimizu F."/>
            <person name="Wakebe H."/>
            <person name="Hishigaki H."/>
            <person name="Watanabe T."/>
            <person name="Sugiyama A."/>
            <person name="Takemoto M."/>
            <person name="Kawakami B."/>
            <person name="Yamazaki M."/>
            <person name="Watanabe K."/>
            <person name="Kumagai A."/>
            <person name="Itakura S."/>
            <person name="Fukuzumi Y."/>
            <person name="Fujimori Y."/>
            <person name="Komiyama M."/>
            <person name="Tashiro H."/>
            <person name="Tanigami A."/>
            <person name="Fujiwara T."/>
            <person name="Ono T."/>
            <person name="Yamada K."/>
            <person name="Fujii Y."/>
            <person name="Ozaki K."/>
            <person name="Hirao M."/>
            <person name="Ohmori Y."/>
            <person name="Kawabata A."/>
            <person name="Hikiji T."/>
            <person name="Kobatake N."/>
            <person name="Inagaki H."/>
            <person name="Ikema Y."/>
            <person name="Okamoto S."/>
            <person name="Okitani R."/>
            <person name="Kawakami T."/>
            <person name="Noguchi S."/>
            <person name="Itoh T."/>
            <person name="Shigeta K."/>
            <person name="Senba T."/>
            <person name="Matsumura K."/>
            <person name="Nakajima Y."/>
            <person name="Mizuno T."/>
            <person name="Morinaga M."/>
            <person name="Sasaki M."/>
            <person name="Togashi T."/>
            <person name="Oyama M."/>
            <person name="Hata H."/>
            <person name="Watanabe M."/>
            <person name="Komatsu T."/>
            <person name="Mizushima-Sugano J."/>
            <person name="Satoh T."/>
            <person name="Shirai Y."/>
            <person name="Takahashi Y."/>
            <person name="Nakagawa K."/>
            <person name="Okumura K."/>
            <person name="Nagase T."/>
            <person name="Nomura N."/>
            <person name="Kikuchi H."/>
            <person name="Masuho Y."/>
            <person name="Yamashita R."/>
            <person name="Nakai K."/>
            <person name="Yada T."/>
            <person name="Nakamura Y."/>
            <person name="Ohara O."/>
            <person name="Isogai T."/>
            <person name="Sugano S."/>
        </authorList>
    </citation>
    <scope>NUCLEOTIDE SEQUENCE [LARGE SCALE MRNA] (ISOFORM 1)</scope>
    <source>
        <tissue>Testis</tissue>
    </source>
</reference>
<reference key="4">
    <citation type="journal article" date="2004" name="Genome Res.">
        <title>The status, quality, and expansion of the NIH full-length cDNA project: the Mammalian Gene Collection (MGC).</title>
        <authorList>
            <consortium name="The MGC Project Team"/>
        </authorList>
    </citation>
    <scope>NUCLEOTIDE SEQUENCE [LARGE SCALE MRNA] (ISOFORMS 1 AND 3)</scope>
    <source>
        <tissue>Testis</tissue>
    </source>
</reference>
<reference key="5">
    <citation type="journal article" date="2004" name="Biol. Reprod.">
        <title>Molecular characterization of heat shock-like factor encoded on the human Y chromosome, and implications for male infertility.</title>
        <authorList>
            <person name="Shinka T."/>
            <person name="Sato Y."/>
            <person name="Chen G."/>
            <person name="Naroda T."/>
            <person name="Kinoshita K."/>
            <person name="Unemi Y."/>
            <person name="Tsuji K."/>
            <person name="Toida K."/>
            <person name="Iwamoto T."/>
            <person name="Nakahori Y."/>
        </authorList>
    </citation>
    <scope>TISSUE SPECIFICITY</scope>
    <scope>SUBCELLULAR LOCATION</scope>
</reference>
<sequence>MAHVSSETQDVSPKDELTASEASTRSPLCEHTFPGDSDLRSMIEEHAFQVLSQGSLLESPSYTVCVSEPDKDDDFLSLNFPRKLWKIVESDQFKSISWDENGTCIVINEELFKKEILETKAPYRIFQTDAIKSFVRQLNLYGFSKIQQNFQRSAFLATFLSEEKESSVLSKLKFYYNPNFKRGYPQLLVRVKRRIGVKNASPISTLFNEDFNKKHFRAGANMENHNSALAAEASEESLFSASKNLNMPLTRESSVRQIIANSSVPIRSGFPPPSPSTSVGPSEQIATDQHAILNQLTTIHMHSHSTYMQARGHIVNFITTTTSQYHIISPLQNGYFGLTVEPSAVPTRYPLVSVNEAPYRNMLPAGNPWLQMPTIADRSAAPHSRLALQPSPLDKYHPNYN</sequence>
<dbReference type="EMBL" id="AJ566404">
    <property type="protein sequence ID" value="CAD98806.1"/>
    <property type="molecule type" value="mRNA"/>
</dbReference>
<dbReference type="EMBL" id="AF332226">
    <property type="protein sequence ID" value="AAK13478.1"/>
    <property type="molecule type" value="mRNA"/>
</dbReference>
<dbReference type="EMBL" id="AF332227">
    <property type="protein sequence ID" value="AAK13479.1"/>
    <property type="molecule type" value="mRNA"/>
</dbReference>
<dbReference type="EMBL" id="AK058182">
    <property type="protein sequence ID" value="BAB71706.1"/>
    <property type="molecule type" value="mRNA"/>
</dbReference>
<dbReference type="EMBL" id="BC036567">
    <property type="protein sequence ID" value="AAH36567.1"/>
    <property type="molecule type" value="mRNA"/>
</dbReference>
<dbReference type="EMBL" id="BC055414">
    <property type="protein sequence ID" value="AAH55414.1"/>
    <property type="molecule type" value="mRNA"/>
</dbReference>
<dbReference type="EMBL" id="BC117380">
    <property type="protein sequence ID" value="AAI17381.1"/>
    <property type="molecule type" value="mRNA"/>
</dbReference>
<dbReference type="EMBL" id="BC117382">
    <property type="protein sequence ID" value="AAI17383.1"/>
    <property type="molecule type" value="mRNA"/>
</dbReference>
<dbReference type="CCDS" id="CCDS14790.1">
    <molecule id="Q96LI6-2"/>
</dbReference>
<dbReference type="CCDS" id="CCDS14791.1">
    <molecule id="Q96LI6-1"/>
</dbReference>
<dbReference type="CCDS" id="CCDS35475.1">
    <molecule id="Q96LI6-1"/>
</dbReference>
<dbReference type="CCDS" id="CCDS35476.1">
    <molecule id="Q96LI6-2"/>
</dbReference>
<dbReference type="RefSeq" id="NP_001001877.1">
    <molecule id="Q96LI6-2"/>
    <property type="nucleotide sequence ID" value="NM_001001877.1"/>
</dbReference>
<dbReference type="RefSeq" id="NP_149099.2">
    <molecule id="Q96LI6-1"/>
    <property type="nucleotide sequence ID" value="NM_033108.3"/>
</dbReference>
<dbReference type="RefSeq" id="NP_689797.1">
    <molecule id="Q96LI6-2"/>
    <property type="nucleotide sequence ID" value="NM_152584.1"/>
</dbReference>
<dbReference type="RefSeq" id="NP_714927.1">
    <molecule id="Q96LI6-1"/>
    <property type="nucleotide sequence ID" value="NM_153716.1"/>
</dbReference>
<dbReference type="RefSeq" id="XP_016885520.1">
    <molecule id="Q96LI6-3"/>
    <property type="nucleotide sequence ID" value="XM_017030031.1"/>
</dbReference>
<dbReference type="BioGRID" id="124576">
    <property type="interactions" value="40"/>
</dbReference>
<dbReference type="BioGRID" id="127733">
    <property type="interactions" value="10"/>
</dbReference>
<dbReference type="FunCoup" id="Q96LI6">
    <property type="interactions" value="22"/>
</dbReference>
<dbReference type="IntAct" id="Q96LI6">
    <property type="interactions" value="46"/>
</dbReference>
<dbReference type="MINT" id="Q96LI6"/>
<dbReference type="STRING" id="9606.ENSP00000303599"/>
<dbReference type="iPTMnet" id="Q96LI6"/>
<dbReference type="PhosphoSitePlus" id="Q96LI6"/>
<dbReference type="BioMuta" id="HSFY1"/>
<dbReference type="DMDM" id="27805481"/>
<dbReference type="MassIVE" id="Q96LI6"/>
<dbReference type="PeptideAtlas" id="Q96LI6"/>
<dbReference type="ProteomicsDB" id="77210">
    <molecule id="Q96LI6-1"/>
</dbReference>
<dbReference type="ProteomicsDB" id="77211">
    <molecule id="Q96LI6-2"/>
</dbReference>
<dbReference type="ProteomicsDB" id="77212">
    <molecule id="Q96LI6-3"/>
</dbReference>
<dbReference type="Antibodypedia" id="35123">
    <property type="antibodies" value="34 antibodies from 11 providers"/>
</dbReference>
<dbReference type="Antibodypedia" id="5617">
    <property type="antibodies" value="118 antibodies from 18 providers"/>
</dbReference>
<dbReference type="DNASU" id="86614"/>
<dbReference type="Ensembl" id="ENST00000304790.3">
    <molecule id="Q96LI6-1"/>
    <property type="protein sequence ID" value="ENSP00000306549.3"/>
    <property type="gene ID" value="ENSG00000169953.12"/>
</dbReference>
<dbReference type="Ensembl" id="ENST00000307393.3">
    <molecule id="Q96LI6-1"/>
    <property type="protein sequence ID" value="ENSP00000303599.2"/>
    <property type="gene ID" value="ENSG00000172468.14"/>
</dbReference>
<dbReference type="Ensembl" id="ENST00000309834.8">
    <molecule id="Q96LI6-2"/>
    <property type="protein sequence ID" value="ENSP00000311166.4"/>
    <property type="gene ID" value="ENSG00000172468.14"/>
</dbReference>
<dbReference type="Ensembl" id="ENST00000338876.8">
    <molecule id="Q96LI6-3"/>
    <property type="protein sequence ID" value="ENSP00000342302.4"/>
    <property type="gene ID" value="ENSG00000172468.14"/>
</dbReference>
<dbReference type="Ensembl" id="ENST00000344884.4">
    <molecule id="Q96LI6-2"/>
    <property type="protein sequence ID" value="ENSP00000340971.4"/>
    <property type="gene ID" value="ENSG00000169953.12"/>
</dbReference>
<dbReference type="Ensembl" id="ENST00000382852.1">
    <molecule id="Q96LI6-3"/>
    <property type="protein sequence ID" value="ENSP00000372303.1"/>
    <property type="gene ID" value="ENSG00000169953.12"/>
</dbReference>
<dbReference type="Ensembl" id="ENST00000382856.2">
    <molecule id="Q96LI6-3"/>
    <property type="protein sequence ID" value="ENSP00000372307.2"/>
    <property type="gene ID" value="ENSG00000172468.14"/>
</dbReference>
<dbReference type="GeneID" id="159119"/>
<dbReference type="GeneID" id="86614"/>
<dbReference type="KEGG" id="hsa:159119"/>
<dbReference type="KEGG" id="hsa:86614"/>
<dbReference type="MANE-Select" id="ENST00000304790.3">
    <property type="protein sequence ID" value="ENSP00000306549.3"/>
    <property type="RefSeq nucleotide sequence ID" value="NM_153716.2"/>
    <property type="RefSeq protein sequence ID" value="NP_714927.1"/>
</dbReference>
<dbReference type="MANE-Select" id="ENST00000307393.3">
    <property type="protein sequence ID" value="ENSP00000303599.2"/>
    <property type="RefSeq nucleotide sequence ID" value="NM_033108.3"/>
    <property type="RefSeq protein sequence ID" value="NP_149099.2"/>
</dbReference>
<dbReference type="UCSC" id="uc004ftp.3">
    <molecule id="Q96LI6-1"/>
    <property type="organism name" value="human"/>
</dbReference>
<dbReference type="AGR" id="HGNC:18568"/>
<dbReference type="AGR" id="HGNC:23950"/>
<dbReference type="CTD" id="159119"/>
<dbReference type="CTD" id="86614"/>
<dbReference type="DisGeNET" id="159119"/>
<dbReference type="DisGeNET" id="86614"/>
<dbReference type="GeneCards" id="HSFY1"/>
<dbReference type="GeneCards" id="HSFY2"/>
<dbReference type="GeneReviews" id="HSFY1"/>
<dbReference type="HGNC" id="HGNC:18568">
    <property type="gene designation" value="HSFY1"/>
</dbReference>
<dbReference type="HGNC" id="HGNC:23950">
    <property type="gene designation" value="HSFY2"/>
</dbReference>
<dbReference type="HPA" id="ENSG00000169953">
    <property type="expression patterns" value="Tissue enriched (testis)"/>
</dbReference>
<dbReference type="HPA" id="ENSG00000172468">
    <property type="expression patterns" value="Tissue enriched (testis)"/>
</dbReference>
<dbReference type="MIM" id="400029">
    <property type="type" value="gene"/>
</dbReference>
<dbReference type="neXtProt" id="NX_Q96LI6"/>
<dbReference type="OpenTargets" id="ENSG00000169953"/>
<dbReference type="PharmGKB" id="PA38580"/>
<dbReference type="VEuPathDB" id="HostDB:ENSG00000169953"/>
<dbReference type="VEuPathDB" id="HostDB:ENSG00000172468"/>
<dbReference type="GeneTree" id="ENSGT00940000157452"/>
<dbReference type="HOGENOM" id="CLU_053156_1_0_1"/>
<dbReference type="InParanoid" id="Q96LI6"/>
<dbReference type="OMA" id="PSHARVN"/>
<dbReference type="OrthoDB" id="6418155at2759"/>
<dbReference type="PAN-GO" id="Q96LI6">
    <property type="GO annotations" value="4 GO annotations based on evolutionary models"/>
</dbReference>
<dbReference type="PhylomeDB" id="Q96LI6"/>
<dbReference type="TreeFam" id="TF330401"/>
<dbReference type="PathwayCommons" id="Q96LI6"/>
<dbReference type="SignaLink" id="Q96LI6"/>
<dbReference type="BioGRID-ORCS" id="159119">
    <property type="hits" value="11 hits in 647 CRISPR screens"/>
</dbReference>
<dbReference type="BioGRID-ORCS" id="86614">
    <property type="hits" value="17 hits in 651 CRISPR screens"/>
</dbReference>
<dbReference type="ChiTaRS" id="HSFY1">
    <property type="organism name" value="human"/>
</dbReference>
<dbReference type="ChiTaRS" id="HSFY2">
    <property type="organism name" value="human"/>
</dbReference>
<dbReference type="Pharos" id="Q96LI6">
    <property type="development level" value="Tdark"/>
</dbReference>
<dbReference type="PRO" id="PR:Q96LI6"/>
<dbReference type="Proteomes" id="UP000005640">
    <property type="component" value="Chromosome Y"/>
</dbReference>
<dbReference type="RNAct" id="Q96LI6">
    <property type="molecule type" value="protein"/>
</dbReference>
<dbReference type="Bgee" id="ENSG00000169953">
    <property type="expression patterns" value="Expressed in male germ line stem cell (sensu Vertebrata) in testis and 43 other cell types or tissues"/>
</dbReference>
<dbReference type="GO" id="GO:0000785">
    <property type="term" value="C:chromatin"/>
    <property type="evidence" value="ECO:0000247"/>
    <property type="project" value="NTNU_SB"/>
</dbReference>
<dbReference type="GO" id="GO:0005829">
    <property type="term" value="C:cytosol"/>
    <property type="evidence" value="ECO:0000314"/>
    <property type="project" value="HPA"/>
</dbReference>
<dbReference type="GO" id="GO:0005654">
    <property type="term" value="C:nucleoplasm"/>
    <property type="evidence" value="ECO:0000314"/>
    <property type="project" value="HPA"/>
</dbReference>
<dbReference type="GO" id="GO:0000981">
    <property type="term" value="F:DNA-binding transcription factor activity, RNA polymerase II-specific"/>
    <property type="evidence" value="ECO:0000247"/>
    <property type="project" value="NTNU_SB"/>
</dbReference>
<dbReference type="GO" id="GO:1990837">
    <property type="term" value="F:sequence-specific double-stranded DNA binding"/>
    <property type="evidence" value="ECO:0000314"/>
    <property type="project" value="ARUK-UCL"/>
</dbReference>
<dbReference type="FunFam" id="1.10.10.10:FF:000349">
    <property type="entry name" value="Heat shock transcription factor, Y-linked"/>
    <property type="match status" value="1"/>
</dbReference>
<dbReference type="Gene3D" id="1.10.10.10">
    <property type="entry name" value="Winged helix-like DNA-binding domain superfamily/Winged helix DNA-binding domain"/>
    <property type="match status" value="1"/>
</dbReference>
<dbReference type="InterPro" id="IPR000232">
    <property type="entry name" value="HSF_DNA-bd"/>
</dbReference>
<dbReference type="InterPro" id="IPR036388">
    <property type="entry name" value="WH-like_DNA-bd_sf"/>
</dbReference>
<dbReference type="InterPro" id="IPR036390">
    <property type="entry name" value="WH_DNA-bd_sf"/>
</dbReference>
<dbReference type="PANTHER" id="PTHR10015">
    <property type="entry name" value="HEAT SHOCK TRANSCRIPTION FACTOR"/>
    <property type="match status" value="1"/>
</dbReference>
<dbReference type="PANTHER" id="PTHR10015:SF336">
    <property type="entry name" value="HEAT SHOCK TRANSCRIPTION FACTOR, Y-LINKED"/>
    <property type="match status" value="1"/>
</dbReference>
<dbReference type="Pfam" id="PF00447">
    <property type="entry name" value="HSF_DNA-bind"/>
    <property type="match status" value="1"/>
</dbReference>
<dbReference type="SMART" id="SM00415">
    <property type="entry name" value="HSF"/>
    <property type="match status" value="1"/>
</dbReference>
<dbReference type="SUPFAM" id="SSF46785">
    <property type="entry name" value="Winged helix' DNA-binding domain"/>
    <property type="match status" value="1"/>
</dbReference>
<organism>
    <name type="scientific">Homo sapiens</name>
    <name type="common">Human</name>
    <dbReference type="NCBI Taxonomy" id="9606"/>
    <lineage>
        <taxon>Eukaryota</taxon>
        <taxon>Metazoa</taxon>
        <taxon>Chordata</taxon>
        <taxon>Craniata</taxon>
        <taxon>Vertebrata</taxon>
        <taxon>Euteleostomi</taxon>
        <taxon>Mammalia</taxon>
        <taxon>Eutheria</taxon>
        <taxon>Euarchontoglires</taxon>
        <taxon>Primates</taxon>
        <taxon>Haplorrhini</taxon>
        <taxon>Catarrhini</taxon>
        <taxon>Hominidae</taxon>
        <taxon>Homo</taxon>
    </lineage>
</organism>
<evidence type="ECO:0000250" key="1">
    <source>
        <dbReference type="UniProtKB" id="P10961"/>
    </source>
</evidence>
<evidence type="ECO:0000256" key="2">
    <source>
        <dbReference type="SAM" id="MobiDB-lite"/>
    </source>
</evidence>
<evidence type="ECO:0000269" key="3">
    <source>
    </source>
</evidence>
<evidence type="ECO:0000269" key="4">
    <source>
    </source>
</evidence>
<evidence type="ECO:0000303" key="5">
    <source>
    </source>
</evidence>
<evidence type="ECO:0000303" key="6">
    <source>
    </source>
</evidence>
<evidence type="ECO:0000303" key="7">
    <source ref="1"/>
</evidence>
<evidence type="ECO:0000305" key="8"/>
<gene>
    <name type="primary">HSFY1</name>
    <name type="synonym">HSF2L</name>
    <name type="synonym">HSFY</name>
</gene>
<gene>
    <name type="primary">HSFY2</name>
    <name type="synonym">HSF2L</name>
    <name type="synonym">HSFY</name>
</gene>
<name>HSFY1_HUMAN</name>
<accession>Q96LI6</accession>
<accession>Q17RC0</accession>
<accession>Q7Z4L8</accession>
<accession>Q9BZA2</accession>
<accession>Q9BZA3</accession>
<protein>
    <recommendedName>
        <fullName>Heat shock transcription factor, Y-linked</fullName>
    </recommendedName>
    <alternativeName>
        <fullName>Heat shock transcription factor 2-like protein</fullName>
        <shortName>HSF2-like</shortName>
    </alternativeName>
</protein>
<feature type="chain" id="PRO_0000124573" description="Heat shock transcription factor, Y-linked">
    <location>
        <begin position="1"/>
        <end position="401"/>
    </location>
</feature>
<feature type="DNA-binding region" evidence="1">
    <location>
        <begin position="76"/>
        <end position="194"/>
    </location>
</feature>
<feature type="region of interest" description="Disordered" evidence="2">
    <location>
        <begin position="1"/>
        <end position="30"/>
    </location>
</feature>
<feature type="compositionally biased region" description="Polar residues" evidence="2">
    <location>
        <begin position="1"/>
        <end position="11"/>
    </location>
</feature>
<feature type="splice variant" id="VSP_009179" description="In isoform 2." evidence="5">
    <original>LKFYYNPNFKRGYPQLLVRVKRRIGVKNASPI</original>
    <variation>IRFTKMKLSRSSTYENRYLCCNLHLKDESNYS</variation>
    <location>
        <begin position="172"/>
        <end position="203"/>
    </location>
</feature>
<feature type="splice variant" id="VSP_009180" description="In isoform 3." evidence="6 7">
    <original>KFYYNPNFKRGYPQLLVRVKRRIGVKNASPISTLFNEDFNKK</original>
    <variation>HVFVFHHSLFGATFGEHHFQPCPLPSGNKAPISTWSGDSWLL</variation>
    <location>
        <begin position="173"/>
        <end position="214"/>
    </location>
</feature>
<feature type="splice variant" id="VSP_009181" description="In isoform 2." evidence="5">
    <location>
        <begin position="204"/>
        <end position="401"/>
    </location>
</feature>
<feature type="splice variant" id="VSP_009182" description="In isoform 3." evidence="6 7">
    <location>
        <begin position="215"/>
        <end position="401"/>
    </location>
</feature>
<feature type="sequence conflict" description="In Ref. 2; AAK13479." evidence="8" ref="2">
    <original>KSISWD</original>
    <variation>SLFSWE</variation>
    <location>
        <begin position="94"/>
        <end position="99"/>
    </location>
</feature>
<feature type="sequence conflict" description="In Ref. 2; AAK13479." evidence="8" ref="2">
    <original>K</original>
    <variation>I</variation>
    <location>
        <position position="164"/>
    </location>
</feature>
<keyword id="KW-0025">Alternative splicing</keyword>
<keyword id="KW-0963">Cytoplasm</keyword>
<keyword id="KW-0238">DNA-binding</keyword>
<keyword id="KW-0539">Nucleus</keyword>
<keyword id="KW-1267">Proteomics identification</keyword>
<keyword id="KW-1185">Reference proteome</keyword>
<keyword id="KW-0804">Transcription</keyword>
<keyword id="KW-0805">Transcription regulation</keyword>